<name>FUMC_PROMA</name>
<sequence length="465" mass="51045">MAQSFRIENDSMGTIKVPDQALWGAQTQRSLINFAIGHNKMPMKLIYSIVQIKASAAIVNCRLGVLDKQRKNFILNACNEISNGMHDEQFPLSVWQTGSGTQTNMNVNEVISNIASHLNGNKLGSHEPLHPNDHVNRSQSTNDVFPAAIQIATVQEILENLLPELDQLIETFDKKIIKWNRIIKTGRTHLQDAVPLTLGQEASAWKEQLIASRNRLNKSLNELYPLPLGGTAIGTGLNAPAKFDKEIALEIAKSTRSPFVSAQNKFAIMASHDALVHTMSQLKLLAVSLFKIVNDLRLLSCGPRGGLGELRLPENEPGSSIMPGKVNPTQCEAMAMVCTQIMALDSAVTMAGSGGHLQMNSYKPLIAFNLLESIDLLSSACKSSRILMIEGIEPNLEKIQNSLQNSLMLITSLTPIIGYEKASKIAQCAHEKDITLKEATKLLGYLNEDDFDRIVNPQSMTGMEN</sequence>
<comment type="function">
    <text evidence="1">Involved in the TCA cycle. Catalyzes the stereospecific interconversion of fumarate to L-malate.</text>
</comment>
<comment type="catalytic activity">
    <reaction evidence="1">
        <text>(S)-malate = fumarate + H2O</text>
        <dbReference type="Rhea" id="RHEA:12460"/>
        <dbReference type="ChEBI" id="CHEBI:15377"/>
        <dbReference type="ChEBI" id="CHEBI:15589"/>
        <dbReference type="ChEBI" id="CHEBI:29806"/>
        <dbReference type="EC" id="4.2.1.2"/>
    </reaction>
</comment>
<comment type="pathway">
    <text evidence="1">Carbohydrate metabolism; tricarboxylic acid cycle; (S)-malate from fumarate: step 1/1.</text>
</comment>
<comment type="subunit">
    <text evidence="1">Homotetramer.</text>
</comment>
<comment type="subcellular location">
    <subcellularLocation>
        <location evidence="1">Cytoplasm</location>
    </subcellularLocation>
</comment>
<comment type="miscellaneous">
    <text evidence="1">There are 2 substrate-binding sites: the catalytic A site, and the non-catalytic B site that may play a role in the transfer of substrate or product between the active site and the solvent. Alternatively, the B site may bind allosteric effectors.</text>
</comment>
<comment type="similarity">
    <text evidence="1">Belongs to the class-II fumarase/aspartase family. Fumarase subfamily.</text>
</comment>
<proteinExistence type="inferred from homology"/>
<organism>
    <name type="scientific">Prochlorococcus marinus (strain SARG / CCMP1375 / SS120)</name>
    <dbReference type="NCBI Taxonomy" id="167539"/>
    <lineage>
        <taxon>Bacteria</taxon>
        <taxon>Bacillati</taxon>
        <taxon>Cyanobacteriota</taxon>
        <taxon>Cyanophyceae</taxon>
        <taxon>Synechococcales</taxon>
        <taxon>Prochlorococcaceae</taxon>
        <taxon>Prochlorococcus</taxon>
    </lineage>
</organism>
<feature type="chain" id="PRO_0000161296" description="Fumarate hydratase class II">
    <location>
        <begin position="1"/>
        <end position="465"/>
    </location>
</feature>
<feature type="active site" description="Proton donor/acceptor" evidence="1">
    <location>
        <position position="189"/>
    </location>
</feature>
<feature type="active site" evidence="1">
    <location>
        <position position="319"/>
    </location>
</feature>
<feature type="binding site" evidence="1">
    <location>
        <begin position="99"/>
        <end position="101"/>
    </location>
    <ligand>
        <name>substrate</name>
    </ligand>
</feature>
<feature type="binding site" description="in site B" evidence="1">
    <location>
        <begin position="130"/>
        <end position="133"/>
    </location>
    <ligand>
        <name>substrate</name>
    </ligand>
</feature>
<feature type="binding site" evidence="1">
    <location>
        <begin position="140"/>
        <end position="142"/>
    </location>
    <ligand>
        <name>substrate</name>
    </ligand>
</feature>
<feature type="binding site" evidence="1">
    <location>
        <position position="188"/>
    </location>
    <ligand>
        <name>substrate</name>
    </ligand>
</feature>
<feature type="binding site" evidence="1">
    <location>
        <position position="320"/>
    </location>
    <ligand>
        <name>substrate</name>
    </ligand>
</feature>
<feature type="binding site" evidence="1">
    <location>
        <begin position="325"/>
        <end position="327"/>
    </location>
    <ligand>
        <name>substrate</name>
    </ligand>
</feature>
<feature type="site" description="Important for catalytic activity" evidence="1">
    <location>
        <position position="332"/>
    </location>
</feature>
<accession>Q7VA47</accession>
<protein>
    <recommendedName>
        <fullName evidence="1">Fumarate hydratase class II</fullName>
        <shortName evidence="1">Fumarase C</shortName>
        <ecNumber evidence="1">4.2.1.2</ecNumber>
    </recommendedName>
    <alternativeName>
        <fullName evidence="1">Aerobic fumarase</fullName>
    </alternativeName>
    <alternativeName>
        <fullName evidence="1">Iron-independent fumarase</fullName>
    </alternativeName>
</protein>
<gene>
    <name evidence="1" type="primary">fumC</name>
    <name type="ordered locus">Pro_1620</name>
</gene>
<reference key="1">
    <citation type="journal article" date="2003" name="Proc. Natl. Acad. Sci. U.S.A.">
        <title>Genome sequence of the cyanobacterium Prochlorococcus marinus SS120, a nearly minimal oxyphototrophic genome.</title>
        <authorList>
            <person name="Dufresne A."/>
            <person name="Salanoubat M."/>
            <person name="Partensky F."/>
            <person name="Artiguenave F."/>
            <person name="Axmann I.M."/>
            <person name="Barbe V."/>
            <person name="Duprat S."/>
            <person name="Galperin M.Y."/>
            <person name="Koonin E.V."/>
            <person name="Le Gall F."/>
            <person name="Makarova K.S."/>
            <person name="Ostrowski M."/>
            <person name="Oztas S."/>
            <person name="Robert C."/>
            <person name="Rogozin I.B."/>
            <person name="Scanlan D.J."/>
            <person name="Tandeau de Marsac N."/>
            <person name="Weissenbach J."/>
            <person name="Wincker P."/>
            <person name="Wolf Y.I."/>
            <person name="Hess W.R."/>
        </authorList>
    </citation>
    <scope>NUCLEOTIDE SEQUENCE [LARGE SCALE GENOMIC DNA]</scope>
    <source>
        <strain>SARG / CCMP1375 / SS120</strain>
    </source>
</reference>
<evidence type="ECO:0000255" key="1">
    <source>
        <dbReference type="HAMAP-Rule" id="MF_00743"/>
    </source>
</evidence>
<keyword id="KW-0963">Cytoplasm</keyword>
<keyword id="KW-0456">Lyase</keyword>
<keyword id="KW-1185">Reference proteome</keyword>
<keyword id="KW-0816">Tricarboxylic acid cycle</keyword>
<dbReference type="EC" id="4.2.1.2" evidence="1"/>
<dbReference type="EMBL" id="AE017126">
    <property type="protein sequence ID" value="AAQ00664.1"/>
    <property type="molecule type" value="Genomic_DNA"/>
</dbReference>
<dbReference type="RefSeq" id="NP_876011.1">
    <property type="nucleotide sequence ID" value="NC_005042.1"/>
</dbReference>
<dbReference type="RefSeq" id="WP_011125770.1">
    <property type="nucleotide sequence ID" value="NC_005042.1"/>
</dbReference>
<dbReference type="SMR" id="Q7VA47"/>
<dbReference type="STRING" id="167539.Pro_1620"/>
<dbReference type="EnsemblBacteria" id="AAQ00664">
    <property type="protein sequence ID" value="AAQ00664"/>
    <property type="gene ID" value="Pro_1620"/>
</dbReference>
<dbReference type="KEGG" id="pma:Pro_1620"/>
<dbReference type="PATRIC" id="fig|167539.5.peg.1712"/>
<dbReference type="eggNOG" id="COG0114">
    <property type="taxonomic scope" value="Bacteria"/>
</dbReference>
<dbReference type="HOGENOM" id="CLU_021594_4_1_3"/>
<dbReference type="OrthoDB" id="9802809at2"/>
<dbReference type="UniPathway" id="UPA00223">
    <property type="reaction ID" value="UER01007"/>
</dbReference>
<dbReference type="Proteomes" id="UP000001420">
    <property type="component" value="Chromosome"/>
</dbReference>
<dbReference type="GO" id="GO:0005737">
    <property type="term" value="C:cytoplasm"/>
    <property type="evidence" value="ECO:0007669"/>
    <property type="project" value="UniProtKB-SubCell"/>
</dbReference>
<dbReference type="GO" id="GO:0004333">
    <property type="term" value="F:fumarate hydratase activity"/>
    <property type="evidence" value="ECO:0007669"/>
    <property type="project" value="UniProtKB-UniRule"/>
</dbReference>
<dbReference type="GO" id="GO:0006106">
    <property type="term" value="P:fumarate metabolic process"/>
    <property type="evidence" value="ECO:0007669"/>
    <property type="project" value="InterPro"/>
</dbReference>
<dbReference type="GO" id="GO:0006108">
    <property type="term" value="P:malate metabolic process"/>
    <property type="evidence" value="ECO:0007669"/>
    <property type="project" value="TreeGrafter"/>
</dbReference>
<dbReference type="GO" id="GO:0006099">
    <property type="term" value="P:tricarboxylic acid cycle"/>
    <property type="evidence" value="ECO:0007669"/>
    <property type="project" value="UniProtKB-UniRule"/>
</dbReference>
<dbReference type="CDD" id="cd01362">
    <property type="entry name" value="Fumarase_classII"/>
    <property type="match status" value="1"/>
</dbReference>
<dbReference type="FunFam" id="1.10.40.30:FF:000002">
    <property type="entry name" value="Fumarate hydratase class II"/>
    <property type="match status" value="1"/>
</dbReference>
<dbReference type="FunFam" id="1.10.275.10:FF:000001">
    <property type="entry name" value="Fumarate hydratase, mitochondrial"/>
    <property type="match status" value="1"/>
</dbReference>
<dbReference type="FunFam" id="1.20.200.10:FF:000001">
    <property type="entry name" value="Fumarate hydratase, mitochondrial"/>
    <property type="match status" value="1"/>
</dbReference>
<dbReference type="Gene3D" id="1.10.40.30">
    <property type="entry name" value="Fumarase/aspartase (C-terminal domain)"/>
    <property type="match status" value="1"/>
</dbReference>
<dbReference type="Gene3D" id="1.20.200.10">
    <property type="entry name" value="Fumarase/aspartase (Central domain)"/>
    <property type="match status" value="1"/>
</dbReference>
<dbReference type="Gene3D" id="1.10.275.10">
    <property type="entry name" value="Fumarase/aspartase (N-terminal domain)"/>
    <property type="match status" value="1"/>
</dbReference>
<dbReference type="HAMAP" id="MF_00743">
    <property type="entry name" value="FumaraseC"/>
    <property type="match status" value="1"/>
</dbReference>
<dbReference type="InterPro" id="IPR005677">
    <property type="entry name" value="Fum_hydII"/>
</dbReference>
<dbReference type="InterPro" id="IPR024083">
    <property type="entry name" value="Fumarase/histidase_N"/>
</dbReference>
<dbReference type="InterPro" id="IPR018951">
    <property type="entry name" value="Fumarase_C_C"/>
</dbReference>
<dbReference type="InterPro" id="IPR020557">
    <property type="entry name" value="Fumarate_lyase_CS"/>
</dbReference>
<dbReference type="InterPro" id="IPR000362">
    <property type="entry name" value="Fumarate_lyase_fam"/>
</dbReference>
<dbReference type="InterPro" id="IPR022761">
    <property type="entry name" value="Fumarate_lyase_N"/>
</dbReference>
<dbReference type="InterPro" id="IPR008948">
    <property type="entry name" value="L-Aspartase-like"/>
</dbReference>
<dbReference type="NCBIfam" id="NF008909">
    <property type="entry name" value="PRK12273.1"/>
    <property type="match status" value="1"/>
</dbReference>
<dbReference type="PANTHER" id="PTHR11444">
    <property type="entry name" value="ASPARTATEAMMONIA/ARGININOSUCCINATE/ADENYLOSUCCINATE LYASE"/>
    <property type="match status" value="1"/>
</dbReference>
<dbReference type="PANTHER" id="PTHR11444:SF1">
    <property type="entry name" value="FUMARATE HYDRATASE, MITOCHONDRIAL"/>
    <property type="match status" value="1"/>
</dbReference>
<dbReference type="Pfam" id="PF10415">
    <property type="entry name" value="FumaraseC_C"/>
    <property type="match status" value="1"/>
</dbReference>
<dbReference type="Pfam" id="PF00206">
    <property type="entry name" value="Lyase_1"/>
    <property type="match status" value="1"/>
</dbReference>
<dbReference type="PRINTS" id="PR00149">
    <property type="entry name" value="FUMRATELYASE"/>
</dbReference>
<dbReference type="SUPFAM" id="SSF48557">
    <property type="entry name" value="L-aspartase-like"/>
    <property type="match status" value="1"/>
</dbReference>
<dbReference type="PROSITE" id="PS00163">
    <property type="entry name" value="FUMARATE_LYASES"/>
    <property type="match status" value="1"/>
</dbReference>